<evidence type="ECO:0000255" key="1">
    <source>
        <dbReference type="HAMAP-Rule" id="MF_00004"/>
    </source>
</evidence>
<gene>
    <name evidence="1" type="primary">apt</name>
    <name type="ordered locus">MMAR_2123</name>
</gene>
<keyword id="KW-0963">Cytoplasm</keyword>
<keyword id="KW-0328">Glycosyltransferase</keyword>
<keyword id="KW-0660">Purine salvage</keyword>
<keyword id="KW-1185">Reference proteome</keyword>
<keyword id="KW-0808">Transferase</keyword>
<accession>B2HN75</accession>
<organism>
    <name type="scientific">Mycobacterium marinum (strain ATCC BAA-535 / M)</name>
    <dbReference type="NCBI Taxonomy" id="216594"/>
    <lineage>
        <taxon>Bacteria</taxon>
        <taxon>Bacillati</taxon>
        <taxon>Actinomycetota</taxon>
        <taxon>Actinomycetes</taxon>
        <taxon>Mycobacteriales</taxon>
        <taxon>Mycobacteriaceae</taxon>
        <taxon>Mycobacterium</taxon>
        <taxon>Mycobacterium ulcerans group</taxon>
    </lineage>
</organism>
<protein>
    <recommendedName>
        <fullName evidence="1">Adenine phosphoribosyltransferase</fullName>
        <shortName evidence="1">APRT</shortName>
        <ecNumber evidence="1">2.4.2.7</ecNumber>
    </recommendedName>
</protein>
<dbReference type="EC" id="2.4.2.7" evidence="1"/>
<dbReference type="EMBL" id="CP000854">
    <property type="protein sequence ID" value="ACC40573.1"/>
    <property type="molecule type" value="Genomic_DNA"/>
</dbReference>
<dbReference type="SMR" id="B2HN75"/>
<dbReference type="STRING" id="216594.MMAR_2123"/>
<dbReference type="KEGG" id="mmi:MMAR_2123"/>
<dbReference type="eggNOG" id="COG0503">
    <property type="taxonomic scope" value="Bacteria"/>
</dbReference>
<dbReference type="HOGENOM" id="CLU_063339_3_3_11"/>
<dbReference type="UniPathway" id="UPA00588">
    <property type="reaction ID" value="UER00646"/>
</dbReference>
<dbReference type="Proteomes" id="UP000001190">
    <property type="component" value="Chromosome"/>
</dbReference>
<dbReference type="GO" id="GO:0005737">
    <property type="term" value="C:cytoplasm"/>
    <property type="evidence" value="ECO:0007669"/>
    <property type="project" value="UniProtKB-SubCell"/>
</dbReference>
<dbReference type="GO" id="GO:0002055">
    <property type="term" value="F:adenine binding"/>
    <property type="evidence" value="ECO:0007669"/>
    <property type="project" value="TreeGrafter"/>
</dbReference>
<dbReference type="GO" id="GO:0003999">
    <property type="term" value="F:adenine phosphoribosyltransferase activity"/>
    <property type="evidence" value="ECO:0007669"/>
    <property type="project" value="UniProtKB-UniRule"/>
</dbReference>
<dbReference type="GO" id="GO:0016208">
    <property type="term" value="F:AMP binding"/>
    <property type="evidence" value="ECO:0007669"/>
    <property type="project" value="TreeGrafter"/>
</dbReference>
<dbReference type="GO" id="GO:0006168">
    <property type="term" value="P:adenine salvage"/>
    <property type="evidence" value="ECO:0007669"/>
    <property type="project" value="InterPro"/>
</dbReference>
<dbReference type="GO" id="GO:0044209">
    <property type="term" value="P:AMP salvage"/>
    <property type="evidence" value="ECO:0007669"/>
    <property type="project" value="UniProtKB-UniRule"/>
</dbReference>
<dbReference type="GO" id="GO:0006166">
    <property type="term" value="P:purine ribonucleoside salvage"/>
    <property type="evidence" value="ECO:0007669"/>
    <property type="project" value="UniProtKB-KW"/>
</dbReference>
<dbReference type="CDD" id="cd06223">
    <property type="entry name" value="PRTases_typeI"/>
    <property type="match status" value="1"/>
</dbReference>
<dbReference type="FunFam" id="3.40.50.2020:FF:000021">
    <property type="entry name" value="Adenine phosphoribosyltransferase"/>
    <property type="match status" value="1"/>
</dbReference>
<dbReference type="Gene3D" id="3.40.50.2020">
    <property type="match status" value="1"/>
</dbReference>
<dbReference type="HAMAP" id="MF_00004">
    <property type="entry name" value="Aden_phosphoribosyltr"/>
    <property type="match status" value="1"/>
</dbReference>
<dbReference type="InterPro" id="IPR005764">
    <property type="entry name" value="Ade_phspho_trans"/>
</dbReference>
<dbReference type="InterPro" id="IPR000836">
    <property type="entry name" value="PRibTrfase_dom"/>
</dbReference>
<dbReference type="InterPro" id="IPR029057">
    <property type="entry name" value="PRTase-like"/>
</dbReference>
<dbReference type="InterPro" id="IPR050054">
    <property type="entry name" value="UPRTase/APRTase"/>
</dbReference>
<dbReference type="NCBIfam" id="NF002636">
    <property type="entry name" value="PRK02304.1-5"/>
    <property type="match status" value="1"/>
</dbReference>
<dbReference type="PANTHER" id="PTHR32315">
    <property type="entry name" value="ADENINE PHOSPHORIBOSYLTRANSFERASE"/>
    <property type="match status" value="1"/>
</dbReference>
<dbReference type="PANTHER" id="PTHR32315:SF3">
    <property type="entry name" value="ADENINE PHOSPHORIBOSYLTRANSFERASE"/>
    <property type="match status" value="1"/>
</dbReference>
<dbReference type="Pfam" id="PF00156">
    <property type="entry name" value="Pribosyltran"/>
    <property type="match status" value="1"/>
</dbReference>
<dbReference type="SUPFAM" id="SSF53271">
    <property type="entry name" value="PRTase-like"/>
    <property type="match status" value="1"/>
</dbReference>
<dbReference type="PROSITE" id="PS00103">
    <property type="entry name" value="PUR_PYR_PR_TRANSFER"/>
    <property type="match status" value="1"/>
</dbReference>
<name>APT_MYCMM</name>
<sequence length="184" mass="19030">MTDLVVTGRGSAPVADLISSLTRDVADFPKPGIQFKDLTPLFADREAMAAVIDALADIAAGTDLVAGIESRGSLVAAALAARLGTGVLSIRKSGKLPPPVLTEEYDREYGAASMEIPADSLELRGRSVMIIDDVLATGGTLGAATRLLKRTGARVTGAAVVVELTALRGREAIAPLRVHSLSRA</sequence>
<reference key="1">
    <citation type="journal article" date="2008" name="Genome Res.">
        <title>Insights from the complete genome sequence of Mycobacterium marinum on the evolution of Mycobacterium tuberculosis.</title>
        <authorList>
            <person name="Stinear T.P."/>
            <person name="Seemann T."/>
            <person name="Harrison P.F."/>
            <person name="Jenkin G.A."/>
            <person name="Davies J.K."/>
            <person name="Johnson P.D."/>
            <person name="Abdellah Z."/>
            <person name="Arrowsmith C."/>
            <person name="Chillingworth T."/>
            <person name="Churcher C."/>
            <person name="Clarke K."/>
            <person name="Cronin A."/>
            <person name="Davis P."/>
            <person name="Goodhead I."/>
            <person name="Holroyd N."/>
            <person name="Jagels K."/>
            <person name="Lord A."/>
            <person name="Moule S."/>
            <person name="Mungall K."/>
            <person name="Norbertczak H."/>
            <person name="Quail M.A."/>
            <person name="Rabbinowitsch E."/>
            <person name="Walker D."/>
            <person name="White B."/>
            <person name="Whitehead S."/>
            <person name="Small P.L."/>
            <person name="Brosch R."/>
            <person name="Ramakrishnan L."/>
            <person name="Fischbach M.A."/>
            <person name="Parkhill J."/>
            <person name="Cole S.T."/>
        </authorList>
    </citation>
    <scope>NUCLEOTIDE SEQUENCE [LARGE SCALE GENOMIC DNA]</scope>
    <source>
        <strain>ATCC BAA-535 / M</strain>
    </source>
</reference>
<proteinExistence type="inferred from homology"/>
<feature type="chain" id="PRO_1000088986" description="Adenine phosphoribosyltransferase">
    <location>
        <begin position="1"/>
        <end position="184"/>
    </location>
</feature>
<comment type="function">
    <text evidence="1">Catalyzes a salvage reaction resulting in the formation of AMP, that is energically less costly than de novo synthesis.</text>
</comment>
<comment type="catalytic activity">
    <reaction evidence="1">
        <text>AMP + diphosphate = 5-phospho-alpha-D-ribose 1-diphosphate + adenine</text>
        <dbReference type="Rhea" id="RHEA:16609"/>
        <dbReference type="ChEBI" id="CHEBI:16708"/>
        <dbReference type="ChEBI" id="CHEBI:33019"/>
        <dbReference type="ChEBI" id="CHEBI:58017"/>
        <dbReference type="ChEBI" id="CHEBI:456215"/>
        <dbReference type="EC" id="2.4.2.7"/>
    </reaction>
</comment>
<comment type="pathway">
    <text evidence="1">Purine metabolism; AMP biosynthesis via salvage pathway; AMP from adenine: step 1/1.</text>
</comment>
<comment type="subunit">
    <text evidence="1">Homodimer.</text>
</comment>
<comment type="subcellular location">
    <subcellularLocation>
        <location evidence="1">Cytoplasm</location>
    </subcellularLocation>
</comment>
<comment type="similarity">
    <text evidence="1">Belongs to the purine/pyrimidine phosphoribosyltransferase family.</text>
</comment>